<gene>
    <name evidence="1" type="primary">guaA</name>
    <name type="ordered locus">Nham_2542</name>
</gene>
<proteinExistence type="inferred from homology"/>
<keyword id="KW-0067">ATP-binding</keyword>
<keyword id="KW-0315">Glutamine amidotransferase</keyword>
<keyword id="KW-0332">GMP biosynthesis</keyword>
<keyword id="KW-0436">Ligase</keyword>
<keyword id="KW-0547">Nucleotide-binding</keyword>
<keyword id="KW-0658">Purine biosynthesis</keyword>
<keyword id="KW-1185">Reference proteome</keyword>
<reference key="1">
    <citation type="submission" date="2006-03" db="EMBL/GenBank/DDBJ databases">
        <title>Complete sequence of chromosome of Nitrobacter hamburgensis X14.</title>
        <authorList>
            <consortium name="US DOE Joint Genome Institute"/>
            <person name="Copeland A."/>
            <person name="Lucas S."/>
            <person name="Lapidus A."/>
            <person name="Barry K."/>
            <person name="Detter J.C."/>
            <person name="Glavina del Rio T."/>
            <person name="Hammon N."/>
            <person name="Israni S."/>
            <person name="Dalin E."/>
            <person name="Tice H."/>
            <person name="Pitluck S."/>
            <person name="Chain P."/>
            <person name="Malfatti S."/>
            <person name="Shin M."/>
            <person name="Vergez L."/>
            <person name="Schmutz J."/>
            <person name="Larimer F."/>
            <person name="Land M."/>
            <person name="Hauser L."/>
            <person name="Kyrpides N."/>
            <person name="Ivanova N."/>
            <person name="Ward B."/>
            <person name="Arp D."/>
            <person name="Klotz M."/>
            <person name="Stein L."/>
            <person name="O'Mullan G."/>
            <person name="Starkenburg S."/>
            <person name="Sayavedra L."/>
            <person name="Poret-Peterson A.T."/>
            <person name="Gentry M.E."/>
            <person name="Bruce D."/>
            <person name="Richardson P."/>
        </authorList>
    </citation>
    <scope>NUCLEOTIDE SEQUENCE [LARGE SCALE GENOMIC DNA]</scope>
    <source>
        <strain>DSM 10229 / NCIMB 13809 / X14</strain>
    </source>
</reference>
<evidence type="ECO:0000255" key="1">
    <source>
        <dbReference type="HAMAP-Rule" id="MF_00344"/>
    </source>
</evidence>
<sequence length="540" mass="58573">MTASSKTPASSSGPSPHAASAHDKILIVDFGSQVTQLIARRIREEGVYSEIVPFQKAEAAFLEMKPKAVILSGGPASVLDKDAPAAPMSILKAGVPVLGICYGEQTMAQQLGGTVEAGHHREFGRAAIEVTDTCALFEGVWEKGGHYNVWMSHGDRVTKLPDGFRAVAKAQGSPIAVIADDARRFYAMQFHPEVVHTPDGAKLLRNFVRKVAGLTGDWTMRAFREEAIEKIRAQVGKGRVICGLSGGVDSSVAAILIHEAIGEQLTCVFVDHGMLRKDEGKTVVELFRHHYNIPLVHVDASKQFLGELAGVTDPEMKRKTIGRLFIDVFEAEAKKIAALGKGSAEFLAQGTLYPDVIESVSFTGGPSVTIKSHHNVGGLPDRMNMKLVEPLRELFKDEVRALGRELGLPEIFVGRHPFPGPGLAIRCPGEITREKLDILREADAVYIDQIRKAGLYDKIWQAFAVLLPVKTVGVMGDGRTYEYVVGLRAVTSTDGMTADFYAFDATFLGATATSIINEVKGVNRVVYDVTSKPPGTIEWE</sequence>
<protein>
    <recommendedName>
        <fullName evidence="1">GMP synthase [glutamine-hydrolyzing]</fullName>
        <ecNumber evidence="1">6.3.5.2</ecNumber>
    </recommendedName>
    <alternativeName>
        <fullName evidence="1">GMP synthetase</fullName>
    </alternativeName>
    <alternativeName>
        <fullName evidence="1">Glutamine amidotransferase</fullName>
    </alternativeName>
</protein>
<accession>Q1QKC3</accession>
<feature type="chain" id="PRO_1000120345" description="GMP synthase [glutamine-hydrolyzing]">
    <location>
        <begin position="1"/>
        <end position="540"/>
    </location>
</feature>
<feature type="domain" description="Glutamine amidotransferase type-1" evidence="1">
    <location>
        <begin position="24"/>
        <end position="217"/>
    </location>
</feature>
<feature type="domain" description="GMPS ATP-PPase" evidence="1">
    <location>
        <begin position="218"/>
        <end position="415"/>
    </location>
</feature>
<feature type="active site" description="Nucleophile" evidence="1">
    <location>
        <position position="101"/>
    </location>
</feature>
<feature type="active site" evidence="1">
    <location>
        <position position="191"/>
    </location>
</feature>
<feature type="active site" evidence="1">
    <location>
        <position position="193"/>
    </location>
</feature>
<feature type="binding site" evidence="1">
    <location>
        <begin position="245"/>
        <end position="251"/>
    </location>
    <ligand>
        <name>ATP</name>
        <dbReference type="ChEBI" id="CHEBI:30616"/>
    </ligand>
</feature>
<organism>
    <name type="scientific">Nitrobacter hamburgensis (strain DSM 10229 / NCIMB 13809 / X14)</name>
    <dbReference type="NCBI Taxonomy" id="323097"/>
    <lineage>
        <taxon>Bacteria</taxon>
        <taxon>Pseudomonadati</taxon>
        <taxon>Pseudomonadota</taxon>
        <taxon>Alphaproteobacteria</taxon>
        <taxon>Hyphomicrobiales</taxon>
        <taxon>Nitrobacteraceae</taxon>
        <taxon>Nitrobacter</taxon>
    </lineage>
</organism>
<dbReference type="EC" id="6.3.5.2" evidence="1"/>
<dbReference type="EMBL" id="CP000319">
    <property type="protein sequence ID" value="ABE63324.1"/>
    <property type="molecule type" value="Genomic_DNA"/>
</dbReference>
<dbReference type="RefSeq" id="WP_011510991.1">
    <property type="nucleotide sequence ID" value="NC_007964.1"/>
</dbReference>
<dbReference type="SMR" id="Q1QKC3"/>
<dbReference type="STRING" id="323097.Nham_2542"/>
<dbReference type="MEROPS" id="C26.A07"/>
<dbReference type="KEGG" id="nha:Nham_2542"/>
<dbReference type="eggNOG" id="COG0518">
    <property type="taxonomic scope" value="Bacteria"/>
</dbReference>
<dbReference type="eggNOG" id="COG0519">
    <property type="taxonomic scope" value="Bacteria"/>
</dbReference>
<dbReference type="HOGENOM" id="CLU_014340_0_5_5"/>
<dbReference type="OrthoDB" id="9802219at2"/>
<dbReference type="UniPathway" id="UPA00189">
    <property type="reaction ID" value="UER00296"/>
</dbReference>
<dbReference type="Proteomes" id="UP000001953">
    <property type="component" value="Chromosome"/>
</dbReference>
<dbReference type="GO" id="GO:0005829">
    <property type="term" value="C:cytosol"/>
    <property type="evidence" value="ECO:0007669"/>
    <property type="project" value="TreeGrafter"/>
</dbReference>
<dbReference type="GO" id="GO:0005524">
    <property type="term" value="F:ATP binding"/>
    <property type="evidence" value="ECO:0007669"/>
    <property type="project" value="UniProtKB-UniRule"/>
</dbReference>
<dbReference type="GO" id="GO:0003921">
    <property type="term" value="F:GMP synthase activity"/>
    <property type="evidence" value="ECO:0007669"/>
    <property type="project" value="InterPro"/>
</dbReference>
<dbReference type="CDD" id="cd01742">
    <property type="entry name" value="GATase1_GMP_Synthase"/>
    <property type="match status" value="1"/>
</dbReference>
<dbReference type="CDD" id="cd01997">
    <property type="entry name" value="GMP_synthase_C"/>
    <property type="match status" value="1"/>
</dbReference>
<dbReference type="FunFam" id="3.30.300.10:FF:000002">
    <property type="entry name" value="GMP synthase [glutamine-hydrolyzing]"/>
    <property type="match status" value="1"/>
</dbReference>
<dbReference type="FunFam" id="3.40.50.620:FF:000001">
    <property type="entry name" value="GMP synthase [glutamine-hydrolyzing]"/>
    <property type="match status" value="1"/>
</dbReference>
<dbReference type="FunFam" id="3.40.50.880:FF:000001">
    <property type="entry name" value="GMP synthase [glutamine-hydrolyzing]"/>
    <property type="match status" value="1"/>
</dbReference>
<dbReference type="Gene3D" id="3.30.300.10">
    <property type="match status" value="1"/>
</dbReference>
<dbReference type="Gene3D" id="3.40.50.880">
    <property type="match status" value="1"/>
</dbReference>
<dbReference type="Gene3D" id="3.40.50.620">
    <property type="entry name" value="HUPs"/>
    <property type="match status" value="1"/>
</dbReference>
<dbReference type="HAMAP" id="MF_00344">
    <property type="entry name" value="GMP_synthase"/>
    <property type="match status" value="1"/>
</dbReference>
<dbReference type="InterPro" id="IPR029062">
    <property type="entry name" value="Class_I_gatase-like"/>
</dbReference>
<dbReference type="InterPro" id="IPR017926">
    <property type="entry name" value="GATASE"/>
</dbReference>
<dbReference type="InterPro" id="IPR001674">
    <property type="entry name" value="GMP_synth_C"/>
</dbReference>
<dbReference type="InterPro" id="IPR004739">
    <property type="entry name" value="GMP_synth_GATase"/>
</dbReference>
<dbReference type="InterPro" id="IPR022955">
    <property type="entry name" value="GMP_synthase"/>
</dbReference>
<dbReference type="InterPro" id="IPR025777">
    <property type="entry name" value="GMPS_ATP_PPase_dom"/>
</dbReference>
<dbReference type="InterPro" id="IPR022310">
    <property type="entry name" value="NAD/GMP_synthase"/>
</dbReference>
<dbReference type="InterPro" id="IPR014729">
    <property type="entry name" value="Rossmann-like_a/b/a_fold"/>
</dbReference>
<dbReference type="NCBIfam" id="TIGR00884">
    <property type="entry name" value="guaA_Cterm"/>
    <property type="match status" value="1"/>
</dbReference>
<dbReference type="NCBIfam" id="TIGR00888">
    <property type="entry name" value="guaA_Nterm"/>
    <property type="match status" value="1"/>
</dbReference>
<dbReference type="NCBIfam" id="NF000848">
    <property type="entry name" value="PRK00074.1"/>
    <property type="match status" value="1"/>
</dbReference>
<dbReference type="PANTHER" id="PTHR11922:SF2">
    <property type="entry name" value="GMP SYNTHASE [GLUTAMINE-HYDROLYZING]"/>
    <property type="match status" value="1"/>
</dbReference>
<dbReference type="PANTHER" id="PTHR11922">
    <property type="entry name" value="GMP SYNTHASE-RELATED"/>
    <property type="match status" value="1"/>
</dbReference>
<dbReference type="Pfam" id="PF00117">
    <property type="entry name" value="GATase"/>
    <property type="match status" value="1"/>
</dbReference>
<dbReference type="Pfam" id="PF00958">
    <property type="entry name" value="GMP_synt_C"/>
    <property type="match status" value="1"/>
</dbReference>
<dbReference type="Pfam" id="PF02540">
    <property type="entry name" value="NAD_synthase"/>
    <property type="match status" value="1"/>
</dbReference>
<dbReference type="PRINTS" id="PR00097">
    <property type="entry name" value="ANTSNTHASEII"/>
</dbReference>
<dbReference type="PRINTS" id="PR00096">
    <property type="entry name" value="GATASE"/>
</dbReference>
<dbReference type="SUPFAM" id="SSF52402">
    <property type="entry name" value="Adenine nucleotide alpha hydrolases-like"/>
    <property type="match status" value="1"/>
</dbReference>
<dbReference type="SUPFAM" id="SSF52317">
    <property type="entry name" value="Class I glutamine amidotransferase-like"/>
    <property type="match status" value="1"/>
</dbReference>
<dbReference type="SUPFAM" id="SSF54810">
    <property type="entry name" value="GMP synthetase C-terminal dimerisation domain"/>
    <property type="match status" value="1"/>
</dbReference>
<dbReference type="PROSITE" id="PS51273">
    <property type="entry name" value="GATASE_TYPE_1"/>
    <property type="match status" value="1"/>
</dbReference>
<dbReference type="PROSITE" id="PS51553">
    <property type="entry name" value="GMPS_ATP_PPASE"/>
    <property type="match status" value="1"/>
</dbReference>
<comment type="function">
    <text evidence="1">Catalyzes the synthesis of GMP from XMP.</text>
</comment>
<comment type="catalytic activity">
    <reaction evidence="1">
        <text>XMP + L-glutamine + ATP + H2O = GMP + L-glutamate + AMP + diphosphate + 2 H(+)</text>
        <dbReference type="Rhea" id="RHEA:11680"/>
        <dbReference type="ChEBI" id="CHEBI:15377"/>
        <dbReference type="ChEBI" id="CHEBI:15378"/>
        <dbReference type="ChEBI" id="CHEBI:29985"/>
        <dbReference type="ChEBI" id="CHEBI:30616"/>
        <dbReference type="ChEBI" id="CHEBI:33019"/>
        <dbReference type="ChEBI" id="CHEBI:57464"/>
        <dbReference type="ChEBI" id="CHEBI:58115"/>
        <dbReference type="ChEBI" id="CHEBI:58359"/>
        <dbReference type="ChEBI" id="CHEBI:456215"/>
        <dbReference type="EC" id="6.3.5.2"/>
    </reaction>
</comment>
<comment type="pathway">
    <text evidence="1">Purine metabolism; GMP biosynthesis; GMP from XMP (L-Gln route): step 1/1.</text>
</comment>
<comment type="subunit">
    <text evidence="1">Homodimer.</text>
</comment>
<name>GUAA_NITHX</name>